<accession>B3EWW8</accession>
<proteinExistence type="evidence at protein level"/>
<sequence>FINTIKLLIEKYREWKNKQSS</sequence>
<keyword id="KW-0027">Amidation</keyword>
<keyword id="KW-0903">Direct protein sequencing</keyword>
<keyword id="KW-0964">Secreted</keyword>
<keyword id="KW-0800">Toxin</keyword>
<reference key="1">
    <citation type="journal article" date="2012" name="FEBS J.">
        <title>Multicomponent venom of the spider Cupiennius salei: a bioanalytical investigation applying different strategies.</title>
        <authorList>
            <person name="Trachsel C."/>
            <person name="Siegemund D."/>
            <person name="Kampfer U."/>
            <person name="Kopp L.S."/>
            <person name="Buhr C."/>
            <person name="Grossmann J."/>
            <person name="Luthi C."/>
            <person name="Cunningham M."/>
            <person name="Nentwig W."/>
            <person name="Kuhn-Nentwig L."/>
            <person name="Schurch S."/>
            <person name="Schaller J."/>
        </authorList>
    </citation>
    <scope>PROTEIN SEQUENCE</scope>
    <scope>MASS SPECTROMETRY</scope>
    <scope>AMIDATION AT SER-21</scope>
    <source>
        <tissue>Venom</tissue>
    </source>
</reference>
<reference key="2">
    <citation type="unpublished observations" date="2015-06">
        <authorList>
            <person name="Kuhn-Nentwig L."/>
            <person name="Gohel T."/>
        </authorList>
    </citation>
    <scope>NOMENCLATURE</scope>
</reference>
<protein>
    <recommendedName>
        <fullName evidence="3">Cupiennin-6d</fullName>
        <shortName evidence="3">Cu-6d</shortName>
    </recommendedName>
    <alternativeName>
        <fullName evidence="2">Short cationic peptide-6d</fullName>
        <shortName evidence="2">SCP-6d</shortName>
    </alternativeName>
</protein>
<dbReference type="GO" id="GO:0005576">
    <property type="term" value="C:extracellular region"/>
    <property type="evidence" value="ECO:0007669"/>
    <property type="project" value="UniProtKB-SubCell"/>
</dbReference>
<dbReference type="GO" id="GO:0090729">
    <property type="term" value="F:toxin activity"/>
    <property type="evidence" value="ECO:0007669"/>
    <property type="project" value="UniProtKB-KW"/>
</dbReference>
<feature type="peptide" id="PRO_0000421227" description="Cupiennin-6d" evidence="1">
    <location>
        <begin position="1"/>
        <end position="21"/>
    </location>
</feature>
<feature type="modified residue" description="Serine amide" evidence="1">
    <location>
        <position position="21"/>
    </location>
</feature>
<organism>
    <name type="scientific">Cupiennius salei</name>
    <name type="common">American wandering spider</name>
    <dbReference type="NCBI Taxonomy" id="6928"/>
    <lineage>
        <taxon>Eukaryota</taxon>
        <taxon>Metazoa</taxon>
        <taxon>Ecdysozoa</taxon>
        <taxon>Arthropoda</taxon>
        <taxon>Chelicerata</taxon>
        <taxon>Arachnida</taxon>
        <taxon>Araneae</taxon>
        <taxon>Araneomorphae</taxon>
        <taxon>Entelegynae</taxon>
        <taxon>Lycosoidea</taxon>
        <taxon>Ctenidae</taxon>
        <taxon>Cupiennius</taxon>
    </lineage>
</organism>
<name>TXC6D_CUPSA</name>
<comment type="subcellular location">
    <subcellularLocation>
        <location evidence="1">Secreted</location>
    </subcellularLocation>
</comment>
<comment type="tissue specificity">
    <text evidence="5">Expressed by the venom gland.</text>
</comment>
<comment type="mass spectrometry"/>
<comment type="similarity">
    <text evidence="4">Belongs to the cationic peptide 04 (cupiennin) family. 09 subfamily.</text>
</comment>
<evidence type="ECO:0000269" key="1">
    <source>
    </source>
</evidence>
<evidence type="ECO:0000303" key="2">
    <source>
    </source>
</evidence>
<evidence type="ECO:0000303" key="3">
    <source ref="2"/>
</evidence>
<evidence type="ECO:0000305" key="4"/>
<evidence type="ECO:0000305" key="5">
    <source>
    </source>
</evidence>